<feature type="chain" id="PRO_0000225806" description="UPF0145 protein BC_5181">
    <location>
        <begin position="1"/>
        <end position="103"/>
    </location>
</feature>
<protein>
    <recommendedName>
        <fullName evidence="1">UPF0145 protein BC_5181</fullName>
    </recommendedName>
</protein>
<dbReference type="EMBL" id="AE016877">
    <property type="protein sequence ID" value="AAP12046.1"/>
    <property type="molecule type" value="Genomic_DNA"/>
</dbReference>
<dbReference type="RefSeq" id="NP_834845.1">
    <property type="nucleotide sequence ID" value="NC_004722.1"/>
</dbReference>
<dbReference type="RefSeq" id="WP_000637521.1">
    <property type="nucleotide sequence ID" value="NZ_CP138336.1"/>
</dbReference>
<dbReference type="SMR" id="Q815H3"/>
<dbReference type="KEGG" id="bce:BC5181"/>
<dbReference type="PATRIC" id="fig|226900.8.peg.5339"/>
<dbReference type="HOGENOM" id="CLU_117144_3_2_9"/>
<dbReference type="OrthoDB" id="9796448at2"/>
<dbReference type="Proteomes" id="UP000001417">
    <property type="component" value="Chromosome"/>
</dbReference>
<dbReference type="Gene3D" id="3.30.110.70">
    <property type="entry name" value="Hypothetical protein apc22750. Chain B"/>
    <property type="match status" value="1"/>
</dbReference>
<dbReference type="HAMAP" id="MF_00338">
    <property type="entry name" value="UPF0145"/>
    <property type="match status" value="1"/>
</dbReference>
<dbReference type="InterPro" id="IPR035439">
    <property type="entry name" value="UPF0145_dom_sf"/>
</dbReference>
<dbReference type="InterPro" id="IPR002765">
    <property type="entry name" value="UPF0145_YbjQ-like"/>
</dbReference>
<dbReference type="NCBIfam" id="NF009495">
    <property type="entry name" value="PRK12855.1"/>
    <property type="match status" value="1"/>
</dbReference>
<dbReference type="NCBIfam" id="NF009496">
    <property type="entry name" value="PRK12856.1"/>
    <property type="match status" value="1"/>
</dbReference>
<dbReference type="PANTHER" id="PTHR34068">
    <property type="entry name" value="UPF0145 PROTEIN YBJQ"/>
    <property type="match status" value="1"/>
</dbReference>
<dbReference type="PANTHER" id="PTHR34068:SF1">
    <property type="entry name" value="UPF0145 PROTEIN YBJQ"/>
    <property type="match status" value="1"/>
</dbReference>
<dbReference type="Pfam" id="PF01906">
    <property type="entry name" value="YbjQ_1"/>
    <property type="match status" value="1"/>
</dbReference>
<dbReference type="SUPFAM" id="SSF117782">
    <property type="entry name" value="YbjQ-like"/>
    <property type="match status" value="1"/>
</dbReference>
<comment type="similarity">
    <text evidence="1">Belongs to the UPF0145 family.</text>
</comment>
<proteinExistence type="inferred from homology"/>
<sequence length="103" mass="11150">MIVTTTSTIQGKEIIDYVDIVNGEAIMGANIVRDLFASVRDVVGGRSGAYESKLKEARDIAMEEMKTLARQKNANAIVGIDVDYEVVREGMLMVAVSGTAVRI</sequence>
<gene>
    <name type="ordered locus">BC_5181</name>
</gene>
<reference key="1">
    <citation type="journal article" date="2003" name="Nature">
        <title>Genome sequence of Bacillus cereus and comparative analysis with Bacillus anthracis.</title>
        <authorList>
            <person name="Ivanova N."/>
            <person name="Sorokin A."/>
            <person name="Anderson I."/>
            <person name="Galleron N."/>
            <person name="Candelon B."/>
            <person name="Kapatral V."/>
            <person name="Bhattacharyya A."/>
            <person name="Reznik G."/>
            <person name="Mikhailova N."/>
            <person name="Lapidus A."/>
            <person name="Chu L."/>
            <person name="Mazur M."/>
            <person name="Goltsman E."/>
            <person name="Larsen N."/>
            <person name="D'Souza M."/>
            <person name="Walunas T."/>
            <person name="Grechkin Y."/>
            <person name="Pusch G."/>
            <person name="Haselkorn R."/>
            <person name="Fonstein M."/>
            <person name="Ehrlich S.D."/>
            <person name="Overbeek R."/>
            <person name="Kyrpides N.C."/>
        </authorList>
    </citation>
    <scope>NUCLEOTIDE SEQUENCE [LARGE SCALE GENOMIC DNA]</scope>
    <source>
        <strain>ATCC 14579 / DSM 31 / CCUG 7414 / JCM 2152 / NBRC 15305 / NCIMB 9373 / NCTC 2599 / NRRL B-3711</strain>
    </source>
</reference>
<organism>
    <name type="scientific">Bacillus cereus (strain ATCC 14579 / DSM 31 / CCUG 7414 / JCM 2152 / NBRC 15305 / NCIMB 9373 / NCTC 2599 / NRRL B-3711)</name>
    <dbReference type="NCBI Taxonomy" id="226900"/>
    <lineage>
        <taxon>Bacteria</taxon>
        <taxon>Bacillati</taxon>
        <taxon>Bacillota</taxon>
        <taxon>Bacilli</taxon>
        <taxon>Bacillales</taxon>
        <taxon>Bacillaceae</taxon>
        <taxon>Bacillus</taxon>
        <taxon>Bacillus cereus group</taxon>
    </lineage>
</organism>
<keyword id="KW-1185">Reference proteome</keyword>
<name>Y5181_BACCR</name>
<evidence type="ECO:0000255" key="1">
    <source>
        <dbReference type="HAMAP-Rule" id="MF_00338"/>
    </source>
</evidence>
<accession>Q815H3</accession>